<organism>
    <name type="scientific">Drosophila melanogaster</name>
    <name type="common">Fruit fly</name>
    <dbReference type="NCBI Taxonomy" id="7227"/>
    <lineage>
        <taxon>Eukaryota</taxon>
        <taxon>Metazoa</taxon>
        <taxon>Ecdysozoa</taxon>
        <taxon>Arthropoda</taxon>
        <taxon>Hexapoda</taxon>
        <taxon>Insecta</taxon>
        <taxon>Pterygota</taxon>
        <taxon>Neoptera</taxon>
        <taxon>Endopterygota</taxon>
        <taxon>Diptera</taxon>
        <taxon>Brachycera</taxon>
        <taxon>Muscomorpha</taxon>
        <taxon>Ephydroidea</taxon>
        <taxon>Drosophilidae</taxon>
        <taxon>Drosophila</taxon>
        <taxon>Sophophora</taxon>
    </lineage>
</organism>
<dbReference type="EMBL" id="AE014297">
    <property type="protein sequence ID" value="AAF55512.1"/>
    <property type="molecule type" value="Genomic_DNA"/>
</dbReference>
<dbReference type="EMBL" id="AY118957">
    <property type="protein sequence ID" value="AAM50817.1"/>
    <property type="molecule type" value="mRNA"/>
</dbReference>
<dbReference type="RefSeq" id="NP_650691.1">
    <property type="nucleotide sequence ID" value="NM_142434.3"/>
</dbReference>
<dbReference type="FunCoup" id="Q9VEB5">
    <property type="interactions" value="748"/>
</dbReference>
<dbReference type="IntAct" id="Q9VEB5">
    <property type="interactions" value="6"/>
</dbReference>
<dbReference type="STRING" id="7227.FBpp0082983"/>
<dbReference type="iPTMnet" id="Q9VEB5"/>
<dbReference type="PaxDb" id="7227-FBpp0082983"/>
<dbReference type="DNASU" id="42180"/>
<dbReference type="EnsemblMetazoa" id="FBtr0083561">
    <property type="protein sequence ID" value="FBpp0082983"/>
    <property type="gene ID" value="FBgn0038582"/>
</dbReference>
<dbReference type="GeneID" id="42180"/>
<dbReference type="KEGG" id="dme:Dmel_CG7988"/>
<dbReference type="UCSC" id="CG7988-RA">
    <property type="organism name" value="d. melanogaster"/>
</dbReference>
<dbReference type="AGR" id="FB:FBgn0038582"/>
<dbReference type="FlyBase" id="FBgn0038582">
    <property type="gene designation" value="CG7988"/>
</dbReference>
<dbReference type="VEuPathDB" id="VectorBase:FBgn0038582"/>
<dbReference type="eggNOG" id="KOG3131">
    <property type="taxonomic scope" value="Eukaryota"/>
</dbReference>
<dbReference type="GeneTree" id="ENSGT00390000003948"/>
<dbReference type="HOGENOM" id="CLU_062516_3_0_1"/>
<dbReference type="InParanoid" id="Q9VEB5"/>
<dbReference type="OMA" id="VVTRKKW"/>
<dbReference type="OrthoDB" id="551431at2759"/>
<dbReference type="PhylomeDB" id="Q9VEB5"/>
<dbReference type="BioGRID-ORCS" id="42180">
    <property type="hits" value="0 hits in 1 CRISPR screen"/>
</dbReference>
<dbReference type="GenomeRNAi" id="42180"/>
<dbReference type="PRO" id="PR:Q9VEB5"/>
<dbReference type="Proteomes" id="UP000000803">
    <property type="component" value="Chromosome 3R"/>
</dbReference>
<dbReference type="Bgee" id="FBgn0038582">
    <property type="expression patterns" value="Expressed in adult tracheocyte (Drosophila) in open tracheal system trachea and 57 other cell types or tissues"/>
</dbReference>
<dbReference type="GO" id="GO:0005737">
    <property type="term" value="C:cytoplasm"/>
    <property type="evidence" value="ECO:0000318"/>
    <property type="project" value="GO_Central"/>
</dbReference>
<dbReference type="GO" id="GO:0005634">
    <property type="term" value="C:nucleus"/>
    <property type="evidence" value="ECO:0000318"/>
    <property type="project" value="GO_Central"/>
</dbReference>
<dbReference type="GO" id="GO:0007623">
    <property type="term" value="P:circadian rhythm"/>
    <property type="evidence" value="ECO:0000250"/>
    <property type="project" value="UniProtKB"/>
</dbReference>
<dbReference type="InterPro" id="IPR012942">
    <property type="entry name" value="SRR1-like"/>
</dbReference>
<dbReference type="InterPro" id="IPR040044">
    <property type="entry name" value="SRR1L"/>
</dbReference>
<dbReference type="PANTHER" id="PTHR28626">
    <property type="entry name" value="SRR1-LIKE PROTEIN"/>
    <property type="match status" value="1"/>
</dbReference>
<dbReference type="PANTHER" id="PTHR28626:SF3">
    <property type="entry name" value="SRR1-LIKE PROTEIN"/>
    <property type="match status" value="1"/>
</dbReference>
<dbReference type="Pfam" id="PF07985">
    <property type="entry name" value="SRR1"/>
    <property type="match status" value="1"/>
</dbReference>
<accession>Q9VEB5</accession>
<comment type="function">
    <text evidence="1">Possible regulator involved in a circadian clock input pathway.</text>
</comment>
<comment type="similarity">
    <text evidence="3">Belongs to the SRR1 family.</text>
</comment>
<keyword id="KW-0090">Biological rhythms</keyword>
<keyword id="KW-0597">Phosphoprotein</keyword>
<keyword id="KW-1185">Reference proteome</keyword>
<sequence>MSNSGEDFQVVTRKKWMARKCLRRRDRHKSESDYLIDCPDVNVEKFQPRLENLCTEMCQSDYFLVAMEALQQQLEGIRKPLERIVCLGLGPFSRTYHALHQAAFVIGLHRHHKIREALYFDPVFRDSEKELIRLFDGCIMSKDCAGKHEATVPTLYYLPHCPYALMHNILWSNWKRETLPNVFLISNSFEMLTMTPRNQDDHITRIVEHCTETPLEDDYEHHNVFNDLSLHTFPQESLPGSNDEAFWTRCAPLKVNEDELITETETSLAALKLESE</sequence>
<proteinExistence type="evidence at protein level"/>
<evidence type="ECO:0000250" key="1"/>
<evidence type="ECO:0000269" key="2">
    <source>
    </source>
</evidence>
<evidence type="ECO:0000305" key="3"/>
<protein>
    <recommendedName>
        <fullName>SRR1-like protein</fullName>
    </recommendedName>
</protein>
<gene>
    <name type="ORF">CG7988</name>
</gene>
<reference key="1">
    <citation type="journal article" date="2000" name="Science">
        <title>The genome sequence of Drosophila melanogaster.</title>
        <authorList>
            <person name="Adams M.D."/>
            <person name="Celniker S.E."/>
            <person name="Holt R.A."/>
            <person name="Evans C.A."/>
            <person name="Gocayne J.D."/>
            <person name="Amanatides P.G."/>
            <person name="Scherer S.E."/>
            <person name="Li P.W."/>
            <person name="Hoskins R.A."/>
            <person name="Galle R.F."/>
            <person name="George R.A."/>
            <person name="Lewis S.E."/>
            <person name="Richards S."/>
            <person name="Ashburner M."/>
            <person name="Henderson S.N."/>
            <person name="Sutton G.G."/>
            <person name="Wortman J.R."/>
            <person name="Yandell M.D."/>
            <person name="Zhang Q."/>
            <person name="Chen L.X."/>
            <person name="Brandon R.C."/>
            <person name="Rogers Y.-H.C."/>
            <person name="Blazej R.G."/>
            <person name="Champe M."/>
            <person name="Pfeiffer B.D."/>
            <person name="Wan K.H."/>
            <person name="Doyle C."/>
            <person name="Baxter E.G."/>
            <person name="Helt G."/>
            <person name="Nelson C.R."/>
            <person name="Miklos G.L.G."/>
            <person name="Abril J.F."/>
            <person name="Agbayani A."/>
            <person name="An H.-J."/>
            <person name="Andrews-Pfannkoch C."/>
            <person name="Baldwin D."/>
            <person name="Ballew R.M."/>
            <person name="Basu A."/>
            <person name="Baxendale J."/>
            <person name="Bayraktaroglu L."/>
            <person name="Beasley E.M."/>
            <person name="Beeson K.Y."/>
            <person name="Benos P.V."/>
            <person name="Berman B.P."/>
            <person name="Bhandari D."/>
            <person name="Bolshakov S."/>
            <person name="Borkova D."/>
            <person name="Botchan M.R."/>
            <person name="Bouck J."/>
            <person name="Brokstein P."/>
            <person name="Brottier P."/>
            <person name="Burtis K.C."/>
            <person name="Busam D.A."/>
            <person name="Butler H."/>
            <person name="Cadieu E."/>
            <person name="Center A."/>
            <person name="Chandra I."/>
            <person name="Cherry J.M."/>
            <person name="Cawley S."/>
            <person name="Dahlke C."/>
            <person name="Davenport L.B."/>
            <person name="Davies P."/>
            <person name="de Pablos B."/>
            <person name="Delcher A."/>
            <person name="Deng Z."/>
            <person name="Mays A.D."/>
            <person name="Dew I."/>
            <person name="Dietz S.M."/>
            <person name="Dodson K."/>
            <person name="Doup L.E."/>
            <person name="Downes M."/>
            <person name="Dugan-Rocha S."/>
            <person name="Dunkov B.C."/>
            <person name="Dunn P."/>
            <person name="Durbin K.J."/>
            <person name="Evangelista C.C."/>
            <person name="Ferraz C."/>
            <person name="Ferriera S."/>
            <person name="Fleischmann W."/>
            <person name="Fosler C."/>
            <person name="Gabrielian A.E."/>
            <person name="Garg N.S."/>
            <person name="Gelbart W.M."/>
            <person name="Glasser K."/>
            <person name="Glodek A."/>
            <person name="Gong F."/>
            <person name="Gorrell J.H."/>
            <person name="Gu Z."/>
            <person name="Guan P."/>
            <person name="Harris M."/>
            <person name="Harris N.L."/>
            <person name="Harvey D.A."/>
            <person name="Heiman T.J."/>
            <person name="Hernandez J.R."/>
            <person name="Houck J."/>
            <person name="Hostin D."/>
            <person name="Houston K.A."/>
            <person name="Howland T.J."/>
            <person name="Wei M.-H."/>
            <person name="Ibegwam C."/>
            <person name="Jalali M."/>
            <person name="Kalush F."/>
            <person name="Karpen G.H."/>
            <person name="Ke Z."/>
            <person name="Kennison J.A."/>
            <person name="Ketchum K.A."/>
            <person name="Kimmel B.E."/>
            <person name="Kodira C.D."/>
            <person name="Kraft C.L."/>
            <person name="Kravitz S."/>
            <person name="Kulp D."/>
            <person name="Lai Z."/>
            <person name="Lasko P."/>
            <person name="Lei Y."/>
            <person name="Levitsky A.A."/>
            <person name="Li J.H."/>
            <person name="Li Z."/>
            <person name="Liang Y."/>
            <person name="Lin X."/>
            <person name="Liu X."/>
            <person name="Mattei B."/>
            <person name="McIntosh T.C."/>
            <person name="McLeod M.P."/>
            <person name="McPherson D."/>
            <person name="Merkulov G."/>
            <person name="Milshina N.V."/>
            <person name="Mobarry C."/>
            <person name="Morris J."/>
            <person name="Moshrefi A."/>
            <person name="Mount S.M."/>
            <person name="Moy M."/>
            <person name="Murphy B."/>
            <person name="Murphy L."/>
            <person name="Muzny D.M."/>
            <person name="Nelson D.L."/>
            <person name="Nelson D.R."/>
            <person name="Nelson K.A."/>
            <person name="Nixon K."/>
            <person name="Nusskern D.R."/>
            <person name="Pacleb J.M."/>
            <person name="Palazzolo M."/>
            <person name="Pittman G.S."/>
            <person name="Pan S."/>
            <person name="Pollard J."/>
            <person name="Puri V."/>
            <person name="Reese M.G."/>
            <person name="Reinert K."/>
            <person name="Remington K."/>
            <person name="Saunders R.D.C."/>
            <person name="Scheeler F."/>
            <person name="Shen H."/>
            <person name="Shue B.C."/>
            <person name="Siden-Kiamos I."/>
            <person name="Simpson M."/>
            <person name="Skupski M.P."/>
            <person name="Smith T.J."/>
            <person name="Spier E."/>
            <person name="Spradling A.C."/>
            <person name="Stapleton M."/>
            <person name="Strong R."/>
            <person name="Sun E."/>
            <person name="Svirskas R."/>
            <person name="Tector C."/>
            <person name="Turner R."/>
            <person name="Venter E."/>
            <person name="Wang A.H."/>
            <person name="Wang X."/>
            <person name="Wang Z.-Y."/>
            <person name="Wassarman D.A."/>
            <person name="Weinstock G.M."/>
            <person name="Weissenbach J."/>
            <person name="Williams S.M."/>
            <person name="Woodage T."/>
            <person name="Worley K.C."/>
            <person name="Wu D."/>
            <person name="Yang S."/>
            <person name="Yao Q.A."/>
            <person name="Ye J."/>
            <person name="Yeh R.-F."/>
            <person name="Zaveri J.S."/>
            <person name="Zhan M."/>
            <person name="Zhang G."/>
            <person name="Zhao Q."/>
            <person name="Zheng L."/>
            <person name="Zheng X.H."/>
            <person name="Zhong F.N."/>
            <person name="Zhong W."/>
            <person name="Zhou X."/>
            <person name="Zhu S.C."/>
            <person name="Zhu X."/>
            <person name="Smith H.O."/>
            <person name="Gibbs R.A."/>
            <person name="Myers E.W."/>
            <person name="Rubin G.M."/>
            <person name="Venter J.C."/>
        </authorList>
    </citation>
    <scope>NUCLEOTIDE SEQUENCE [LARGE SCALE GENOMIC DNA]</scope>
    <source>
        <strain>Berkeley</strain>
    </source>
</reference>
<reference key="2">
    <citation type="journal article" date="2002" name="Genome Biol.">
        <title>Annotation of the Drosophila melanogaster euchromatic genome: a systematic review.</title>
        <authorList>
            <person name="Misra S."/>
            <person name="Crosby M.A."/>
            <person name="Mungall C.J."/>
            <person name="Matthews B.B."/>
            <person name="Campbell K.S."/>
            <person name="Hradecky P."/>
            <person name="Huang Y."/>
            <person name="Kaminker J.S."/>
            <person name="Millburn G.H."/>
            <person name="Prochnik S.E."/>
            <person name="Smith C.D."/>
            <person name="Tupy J.L."/>
            <person name="Whitfield E.J."/>
            <person name="Bayraktaroglu L."/>
            <person name="Berman B.P."/>
            <person name="Bettencourt B.R."/>
            <person name="Celniker S.E."/>
            <person name="de Grey A.D.N.J."/>
            <person name="Drysdale R.A."/>
            <person name="Harris N.L."/>
            <person name="Richter J."/>
            <person name="Russo S."/>
            <person name="Schroeder A.J."/>
            <person name="Shu S.Q."/>
            <person name="Stapleton M."/>
            <person name="Yamada C."/>
            <person name="Ashburner M."/>
            <person name="Gelbart W.M."/>
            <person name="Rubin G.M."/>
            <person name="Lewis S.E."/>
        </authorList>
    </citation>
    <scope>GENOME REANNOTATION</scope>
    <source>
        <strain>Berkeley</strain>
    </source>
</reference>
<reference key="3">
    <citation type="journal article" date="2002" name="Genome Biol.">
        <title>A Drosophila full-length cDNA resource.</title>
        <authorList>
            <person name="Stapleton M."/>
            <person name="Carlson J.W."/>
            <person name="Brokstein P."/>
            <person name="Yu C."/>
            <person name="Champe M."/>
            <person name="George R.A."/>
            <person name="Guarin H."/>
            <person name="Kronmiller B."/>
            <person name="Pacleb J.M."/>
            <person name="Park S."/>
            <person name="Wan K.H."/>
            <person name="Rubin G.M."/>
            <person name="Celniker S.E."/>
        </authorList>
    </citation>
    <scope>NUCLEOTIDE SEQUENCE [LARGE SCALE MRNA]</scope>
    <source>
        <strain>Berkeley</strain>
        <tissue>Embryo</tissue>
    </source>
</reference>
<reference key="4">
    <citation type="journal article" date="2008" name="J. Proteome Res.">
        <title>Phosphoproteome analysis of Drosophila melanogaster embryos.</title>
        <authorList>
            <person name="Zhai B."/>
            <person name="Villen J."/>
            <person name="Beausoleil S.A."/>
            <person name="Mintseris J."/>
            <person name="Gygi S.P."/>
        </authorList>
    </citation>
    <scope>PHOSPHORYLATION [LARGE SCALE ANALYSIS] AT SER-30 AND TYR-34</scope>
    <scope>IDENTIFICATION BY MASS SPECTROMETRY</scope>
    <source>
        <tissue>Embryo</tissue>
    </source>
</reference>
<feature type="chain" id="PRO_0000186125" description="SRR1-like protein">
    <location>
        <begin position="1"/>
        <end position="276"/>
    </location>
</feature>
<feature type="modified residue" description="Phosphoserine" evidence="2">
    <location>
        <position position="30"/>
    </location>
</feature>
<feature type="modified residue" description="Phosphotyrosine" evidence="2">
    <location>
        <position position="34"/>
    </location>
</feature>
<name>SRR1L_DROME</name>